<feature type="chain" id="PRO_0000156573" description="Homoserine kinase">
    <location>
        <begin position="1"/>
        <end position="299"/>
    </location>
</feature>
<feature type="binding site" evidence="1">
    <location>
        <begin position="88"/>
        <end position="98"/>
    </location>
    <ligand>
        <name>ATP</name>
        <dbReference type="ChEBI" id="CHEBI:30616"/>
    </ligand>
</feature>
<sequence>MCVRVPATSANLGPGFDCLGVALDLANEFEFCEADRFRCVVHSTVSPEDARQVATDERNLAWRAFTHLFEHLGKTPPTVALTVMMHVPLGRGLGSSATAIVGGIAAANRWLGSPLSTPEWLLLASRLEGHPDNVVPAALGGCQLSILGETLLTCALDWHPQIALVLAVPDFALATSKARAALPKTVPHTDAVFNAVHLALLVRALATGDARWLAEALQDRLHQPYRTGLIPGWQDVRAAALEAGAWGVVISGAGPSVLALTHLDCAEAVRQAMASTWPNACLYCPGLDPNGCRVEVEAG</sequence>
<dbReference type="EC" id="2.7.1.39" evidence="1"/>
<dbReference type="EMBL" id="BA000045">
    <property type="protein sequence ID" value="BAC89068.1"/>
    <property type="molecule type" value="Genomic_DNA"/>
</dbReference>
<dbReference type="RefSeq" id="NP_924073.1">
    <property type="nucleotide sequence ID" value="NC_005125.1"/>
</dbReference>
<dbReference type="RefSeq" id="WP_011141127.1">
    <property type="nucleotide sequence ID" value="NC_005125.1"/>
</dbReference>
<dbReference type="SMR" id="Q7NLJ6"/>
<dbReference type="FunCoup" id="Q7NLJ6">
    <property type="interactions" value="240"/>
</dbReference>
<dbReference type="STRING" id="251221.gene:10758606"/>
<dbReference type="EnsemblBacteria" id="BAC89068">
    <property type="protein sequence ID" value="BAC89068"/>
    <property type="gene ID" value="BAC89068"/>
</dbReference>
<dbReference type="KEGG" id="gvi:gll1127"/>
<dbReference type="PATRIC" id="fig|251221.4.peg.1152"/>
<dbReference type="eggNOG" id="COG0083">
    <property type="taxonomic scope" value="Bacteria"/>
</dbReference>
<dbReference type="HOGENOM" id="CLU_041243_0_2_3"/>
<dbReference type="InParanoid" id="Q7NLJ6"/>
<dbReference type="OrthoDB" id="9769912at2"/>
<dbReference type="PhylomeDB" id="Q7NLJ6"/>
<dbReference type="UniPathway" id="UPA00050">
    <property type="reaction ID" value="UER00064"/>
</dbReference>
<dbReference type="Proteomes" id="UP000000557">
    <property type="component" value="Chromosome"/>
</dbReference>
<dbReference type="GO" id="GO:0005737">
    <property type="term" value="C:cytoplasm"/>
    <property type="evidence" value="ECO:0007669"/>
    <property type="project" value="UniProtKB-SubCell"/>
</dbReference>
<dbReference type="GO" id="GO:0005524">
    <property type="term" value="F:ATP binding"/>
    <property type="evidence" value="ECO:0007669"/>
    <property type="project" value="UniProtKB-UniRule"/>
</dbReference>
<dbReference type="GO" id="GO:0004413">
    <property type="term" value="F:homoserine kinase activity"/>
    <property type="evidence" value="ECO:0007669"/>
    <property type="project" value="UniProtKB-UniRule"/>
</dbReference>
<dbReference type="GO" id="GO:0009088">
    <property type="term" value="P:threonine biosynthetic process"/>
    <property type="evidence" value="ECO:0007669"/>
    <property type="project" value="UniProtKB-UniRule"/>
</dbReference>
<dbReference type="Gene3D" id="3.30.230.10">
    <property type="match status" value="1"/>
</dbReference>
<dbReference type="Gene3D" id="3.30.70.890">
    <property type="entry name" value="GHMP kinase, C-terminal domain"/>
    <property type="match status" value="1"/>
</dbReference>
<dbReference type="HAMAP" id="MF_00384">
    <property type="entry name" value="Homoser_kinase"/>
    <property type="match status" value="1"/>
</dbReference>
<dbReference type="InterPro" id="IPR013750">
    <property type="entry name" value="GHMP_kinase_C_dom"/>
</dbReference>
<dbReference type="InterPro" id="IPR036554">
    <property type="entry name" value="GHMP_kinase_C_sf"/>
</dbReference>
<dbReference type="InterPro" id="IPR006204">
    <property type="entry name" value="GHMP_kinase_N_dom"/>
</dbReference>
<dbReference type="InterPro" id="IPR006203">
    <property type="entry name" value="GHMP_knse_ATP-bd_CS"/>
</dbReference>
<dbReference type="InterPro" id="IPR000870">
    <property type="entry name" value="Homoserine_kinase"/>
</dbReference>
<dbReference type="InterPro" id="IPR020568">
    <property type="entry name" value="Ribosomal_Su5_D2-typ_SF"/>
</dbReference>
<dbReference type="InterPro" id="IPR014721">
    <property type="entry name" value="Ribsml_uS5_D2-typ_fold_subgr"/>
</dbReference>
<dbReference type="NCBIfam" id="TIGR00191">
    <property type="entry name" value="thrB"/>
    <property type="match status" value="1"/>
</dbReference>
<dbReference type="PANTHER" id="PTHR20861:SF1">
    <property type="entry name" value="HOMOSERINE KINASE"/>
    <property type="match status" value="1"/>
</dbReference>
<dbReference type="PANTHER" id="PTHR20861">
    <property type="entry name" value="HOMOSERINE/4-DIPHOSPHOCYTIDYL-2-C-METHYL-D-ERYTHRITOL KINASE"/>
    <property type="match status" value="1"/>
</dbReference>
<dbReference type="Pfam" id="PF08544">
    <property type="entry name" value="GHMP_kinases_C"/>
    <property type="match status" value="1"/>
</dbReference>
<dbReference type="Pfam" id="PF00288">
    <property type="entry name" value="GHMP_kinases_N"/>
    <property type="match status" value="1"/>
</dbReference>
<dbReference type="PIRSF" id="PIRSF000676">
    <property type="entry name" value="Homoser_kin"/>
    <property type="match status" value="1"/>
</dbReference>
<dbReference type="PRINTS" id="PR00958">
    <property type="entry name" value="HOMSERKINASE"/>
</dbReference>
<dbReference type="SUPFAM" id="SSF55060">
    <property type="entry name" value="GHMP Kinase, C-terminal domain"/>
    <property type="match status" value="1"/>
</dbReference>
<dbReference type="SUPFAM" id="SSF54211">
    <property type="entry name" value="Ribosomal protein S5 domain 2-like"/>
    <property type="match status" value="1"/>
</dbReference>
<dbReference type="PROSITE" id="PS00627">
    <property type="entry name" value="GHMP_KINASES_ATP"/>
    <property type="match status" value="1"/>
</dbReference>
<reference key="1">
    <citation type="journal article" date="2003" name="DNA Res.">
        <title>Complete genome structure of Gloeobacter violaceus PCC 7421, a cyanobacterium that lacks thylakoids.</title>
        <authorList>
            <person name="Nakamura Y."/>
            <person name="Kaneko T."/>
            <person name="Sato S."/>
            <person name="Mimuro M."/>
            <person name="Miyashita H."/>
            <person name="Tsuchiya T."/>
            <person name="Sasamoto S."/>
            <person name="Watanabe A."/>
            <person name="Kawashima K."/>
            <person name="Kishida Y."/>
            <person name="Kiyokawa C."/>
            <person name="Kohara M."/>
            <person name="Matsumoto M."/>
            <person name="Matsuno A."/>
            <person name="Nakazaki N."/>
            <person name="Shimpo S."/>
            <person name="Takeuchi C."/>
            <person name="Yamada M."/>
            <person name="Tabata S."/>
        </authorList>
    </citation>
    <scope>NUCLEOTIDE SEQUENCE [LARGE SCALE GENOMIC DNA]</scope>
    <source>
        <strain>ATCC 29082 / PCC 7421</strain>
    </source>
</reference>
<organism>
    <name type="scientific">Gloeobacter violaceus (strain ATCC 29082 / PCC 7421)</name>
    <dbReference type="NCBI Taxonomy" id="251221"/>
    <lineage>
        <taxon>Bacteria</taxon>
        <taxon>Bacillati</taxon>
        <taxon>Cyanobacteriota</taxon>
        <taxon>Cyanophyceae</taxon>
        <taxon>Gloeobacterales</taxon>
        <taxon>Gloeobacteraceae</taxon>
        <taxon>Gloeobacter</taxon>
    </lineage>
</organism>
<accession>Q7NLJ6</accession>
<name>KHSE_GLOVI</name>
<protein>
    <recommendedName>
        <fullName evidence="1">Homoserine kinase</fullName>
        <shortName evidence="1">HK</shortName>
        <shortName evidence="1">HSK</shortName>
        <ecNumber evidence="1">2.7.1.39</ecNumber>
    </recommendedName>
</protein>
<keyword id="KW-0028">Amino-acid biosynthesis</keyword>
<keyword id="KW-0067">ATP-binding</keyword>
<keyword id="KW-0963">Cytoplasm</keyword>
<keyword id="KW-0418">Kinase</keyword>
<keyword id="KW-0547">Nucleotide-binding</keyword>
<keyword id="KW-1185">Reference proteome</keyword>
<keyword id="KW-0791">Threonine biosynthesis</keyword>
<keyword id="KW-0808">Transferase</keyword>
<comment type="function">
    <text evidence="1">Catalyzes the ATP-dependent phosphorylation of L-homoserine to L-homoserine phosphate.</text>
</comment>
<comment type="catalytic activity">
    <reaction evidence="1">
        <text>L-homoserine + ATP = O-phospho-L-homoserine + ADP + H(+)</text>
        <dbReference type="Rhea" id="RHEA:13985"/>
        <dbReference type="ChEBI" id="CHEBI:15378"/>
        <dbReference type="ChEBI" id="CHEBI:30616"/>
        <dbReference type="ChEBI" id="CHEBI:57476"/>
        <dbReference type="ChEBI" id="CHEBI:57590"/>
        <dbReference type="ChEBI" id="CHEBI:456216"/>
        <dbReference type="EC" id="2.7.1.39"/>
    </reaction>
</comment>
<comment type="pathway">
    <text evidence="1">Amino-acid biosynthesis; L-threonine biosynthesis; L-threonine from L-aspartate: step 4/5.</text>
</comment>
<comment type="subcellular location">
    <subcellularLocation>
        <location evidence="1">Cytoplasm</location>
    </subcellularLocation>
</comment>
<comment type="similarity">
    <text evidence="1">Belongs to the GHMP kinase family. Homoserine kinase subfamily.</text>
</comment>
<gene>
    <name evidence="1" type="primary">thrB</name>
    <name type="ordered locus">gll1127</name>
</gene>
<evidence type="ECO:0000255" key="1">
    <source>
        <dbReference type="HAMAP-Rule" id="MF_00384"/>
    </source>
</evidence>
<proteinExistence type="inferred from homology"/>